<dbReference type="EC" id="1.3.7.7" evidence="1"/>
<dbReference type="EMBL" id="L13782">
    <property type="protein sequence ID" value="AAA16321.1"/>
    <property type="molecule type" value="Genomic_DNA"/>
</dbReference>
<dbReference type="EMBL" id="U02526">
    <property type="protein sequence ID" value="AAB06265.1"/>
    <property type="molecule type" value="Genomic_DNA"/>
</dbReference>
<dbReference type="EMBL" id="FJ423446">
    <property type="protein sequence ID" value="ACJ50093.1"/>
    <property type="molecule type" value="Genomic_DNA"/>
</dbReference>
<dbReference type="EMBL" id="BK000554">
    <property type="protein sequence ID" value="DAA00906.1"/>
    <property type="molecule type" value="Genomic_DNA"/>
</dbReference>
<dbReference type="PIR" id="S39491">
    <property type="entry name" value="S39491"/>
</dbReference>
<dbReference type="RefSeq" id="NP_958360.1">
    <property type="nucleotide sequence ID" value="NC_005353.1"/>
</dbReference>
<dbReference type="SMR" id="P36437"/>
<dbReference type="STRING" id="3055.P36437"/>
<dbReference type="PaxDb" id="3055-DAA00906"/>
<dbReference type="GeneID" id="2716966"/>
<dbReference type="KEGG" id="cre:ChreCp003"/>
<dbReference type="eggNOG" id="ENOG502QUNZ">
    <property type="taxonomic scope" value="Eukaryota"/>
</dbReference>
<dbReference type="HOGENOM" id="CLU_025470_0_0_1"/>
<dbReference type="InParanoid" id="P36437"/>
<dbReference type="BioCyc" id="MetaCyc:CHRECP003-MONOMER"/>
<dbReference type="UniPathway" id="UPA00670"/>
<dbReference type="Proteomes" id="UP000006906">
    <property type="component" value="Chloroplast"/>
</dbReference>
<dbReference type="GO" id="GO:0009507">
    <property type="term" value="C:chloroplast"/>
    <property type="evidence" value="ECO:0007669"/>
    <property type="project" value="UniProtKB-SubCell"/>
</dbReference>
<dbReference type="GO" id="GO:0051539">
    <property type="term" value="F:4 iron, 4 sulfur cluster binding"/>
    <property type="evidence" value="ECO:0007669"/>
    <property type="project" value="UniProtKB-UniRule"/>
</dbReference>
<dbReference type="GO" id="GO:0005524">
    <property type="term" value="F:ATP binding"/>
    <property type="evidence" value="ECO:0007669"/>
    <property type="project" value="UniProtKB-UniRule"/>
</dbReference>
<dbReference type="GO" id="GO:0046872">
    <property type="term" value="F:metal ion binding"/>
    <property type="evidence" value="ECO:0007669"/>
    <property type="project" value="UniProtKB-KW"/>
</dbReference>
<dbReference type="GO" id="GO:0016730">
    <property type="term" value="F:oxidoreductase activity, acting on iron-sulfur proteins as donors"/>
    <property type="evidence" value="ECO:0007669"/>
    <property type="project" value="InterPro"/>
</dbReference>
<dbReference type="GO" id="GO:0016636">
    <property type="term" value="F:oxidoreductase activity, acting on the CH-CH group of donors, iron-sulfur protein as acceptor"/>
    <property type="evidence" value="ECO:0007669"/>
    <property type="project" value="UniProtKB-UniRule"/>
</dbReference>
<dbReference type="GO" id="GO:0036068">
    <property type="term" value="P:light-independent chlorophyll biosynthetic process"/>
    <property type="evidence" value="ECO:0007669"/>
    <property type="project" value="UniProtKB-UniRule"/>
</dbReference>
<dbReference type="GO" id="GO:0019685">
    <property type="term" value="P:photosynthesis, dark reaction"/>
    <property type="evidence" value="ECO:0007669"/>
    <property type="project" value="InterPro"/>
</dbReference>
<dbReference type="CDD" id="cd01981">
    <property type="entry name" value="Pchlide_reductase_B"/>
    <property type="match status" value="1"/>
</dbReference>
<dbReference type="Gene3D" id="1.20.89.20">
    <property type="match status" value="1"/>
</dbReference>
<dbReference type="Gene3D" id="3.40.50.1980">
    <property type="entry name" value="Nitrogenase molybdenum iron protein domain"/>
    <property type="match status" value="3"/>
</dbReference>
<dbReference type="Gene3D" id="1.10.8.550">
    <property type="entry name" value="Proto-chlorophyllide reductase 57 kD subunit B"/>
    <property type="match status" value="1"/>
</dbReference>
<dbReference type="HAMAP" id="MF_00353">
    <property type="entry name" value="ChlB_BchB"/>
    <property type="match status" value="1"/>
</dbReference>
<dbReference type="InterPro" id="IPR050152">
    <property type="entry name" value="ChlB/BchB/BchZ"/>
</dbReference>
<dbReference type="InterPro" id="IPR013580">
    <property type="entry name" value="LI-POR_suB-like_C"/>
</dbReference>
<dbReference type="InterPro" id="IPR000510">
    <property type="entry name" value="Nase/OxRdtase_comp1"/>
</dbReference>
<dbReference type="InterPro" id="IPR042298">
    <property type="entry name" value="P-CP_red_C"/>
</dbReference>
<dbReference type="InterPro" id="IPR005969">
    <property type="entry name" value="Protochl_reductB"/>
</dbReference>
<dbReference type="PANTHER" id="PTHR33712">
    <property type="entry name" value="LIGHT-INDEPENDENT PROTOCHLOROPHYLLIDE REDUCTASE SUBUNIT B"/>
    <property type="match status" value="1"/>
</dbReference>
<dbReference type="PANTHER" id="PTHR33712:SF7">
    <property type="entry name" value="LIGHT-INDEPENDENT PROTOCHLOROPHYLLIDE REDUCTASE SUBUNIT B"/>
    <property type="match status" value="1"/>
</dbReference>
<dbReference type="Pfam" id="PF00148">
    <property type="entry name" value="Oxidored_nitro"/>
    <property type="match status" value="3"/>
</dbReference>
<dbReference type="Pfam" id="PF08369">
    <property type="entry name" value="PCP_red"/>
    <property type="match status" value="1"/>
</dbReference>
<dbReference type="SUPFAM" id="SSF53807">
    <property type="entry name" value="Helical backbone' metal receptor"/>
    <property type="match status" value="2"/>
</dbReference>
<organism>
    <name type="scientific">Chlamydomonas reinhardtii</name>
    <name type="common">Chlamydomonas smithii</name>
    <dbReference type="NCBI Taxonomy" id="3055"/>
    <lineage>
        <taxon>Eukaryota</taxon>
        <taxon>Viridiplantae</taxon>
        <taxon>Chlorophyta</taxon>
        <taxon>core chlorophytes</taxon>
        <taxon>Chlorophyceae</taxon>
        <taxon>CS clade</taxon>
        <taxon>Chlamydomonadales</taxon>
        <taxon>Chlamydomonadaceae</taxon>
        <taxon>Chlamydomonas</taxon>
    </lineage>
</organism>
<proteinExistence type="inferred from homology"/>
<sequence length="687" mass="76625">MKLAYWMYAGPAHIGVLRVSSSFKNVHAIMHAPLGDDYFNVMRSMLERERDFTPVTASIVDRHVLARGSQEKVVENITRKNKEETPDLILLTPTCTSSILQEDLHNFVESALAKPVQIDEHADHKVTQQSALSSVSPLLPLEENTLIVSELDKKLSPSSKLHINMPNICIPEGEGEGEQTKNSIFVKSATLTNLSEEELLNQEHHTKTRNHSDVILADVNHYRVNELQAADRTLEQIVRYYISQAQKQNCLNITKTAKPSVNIIGIFTLGFHNQHDCRELKRLFNDLGIQINEIIPEGGNVHNLKKLPQAWFNFVPYREIGLMTAMYLKSEFNMPYVAITPMGLIDTAACIRSICKIITTQLLNQTATVQEPSKFIYPKATSLEQTNILETSQKETILKDNPDSGNTLSTTVEEIETLFNKYIDQQTRFVSQAAWFSRSIDCQNLTGKKAVVFGDATHSAAMTKLLAREMGIKVSCAGTYCKHDADWFREQVSGFCDQVLITDDHTQVGDMIAQLEPAAIFGTQMERHVGKRLDIPCGVISAPVHIQNFPLGYRPFLGYEGTNQIADLVYNSFNLGMEDHLLQIFGGHDSENNSSIATHLNTNNAINLAPGYLPEGEGSSRTSNVVSTISSEKKAIVWSPEGLAELNKVPGFVRGKVKRNTEKYALQKNCSMITVEVMYAAKEALSA</sequence>
<protein>
    <recommendedName>
        <fullName evidence="1">Light-independent protochlorophyllide reductase subunit B</fullName>
        <shortName evidence="1">DPOR subunit B</shortName>
        <shortName evidence="1">LI-POR subunit B</shortName>
        <ecNumber evidence="1">1.3.7.7</ecNumber>
    </recommendedName>
</protein>
<gene>
    <name evidence="1" type="primary">chlB</name>
</gene>
<evidence type="ECO:0000255" key="1">
    <source>
        <dbReference type="HAMAP-Rule" id="MF_00353"/>
    </source>
</evidence>
<evidence type="ECO:0000305" key="2"/>
<accession>P36437</accession>
<accession>B7U1E6</accession>
<keyword id="KW-0004">4Fe-4S</keyword>
<keyword id="KW-0067">ATP-binding</keyword>
<keyword id="KW-0149">Chlorophyll biosynthesis</keyword>
<keyword id="KW-0150">Chloroplast</keyword>
<keyword id="KW-0408">Iron</keyword>
<keyword id="KW-0411">Iron-sulfur</keyword>
<keyword id="KW-0479">Metal-binding</keyword>
<keyword id="KW-0547">Nucleotide-binding</keyword>
<keyword id="KW-0560">Oxidoreductase</keyword>
<keyword id="KW-0602">Photosynthesis</keyword>
<keyword id="KW-0934">Plastid</keyword>
<keyword id="KW-1185">Reference proteome</keyword>
<reference key="1">
    <citation type="journal article" date="1993" name="Plant Mol. Biol.">
        <title>Chloroplast chlB gene is required for light-independent chlorophyll accumulation in Chlamydomonas reinhardtii.</title>
        <authorList>
            <person name="Liu X.-Q."/>
            <person name="Xu H."/>
            <person name="Huang C."/>
        </authorList>
    </citation>
    <scope>NUCLEOTIDE SEQUENCE [GENOMIC DNA]</scope>
    <source>
        <strain>137c / CC-125</strain>
    </source>
</reference>
<reference key="2">
    <citation type="journal article" date="1993" name="Plant Cell">
        <title>Chloroplast-encoded chlB is required for light-independent protochlorophyllide reductase activity in Chlamydomonas reinhardtii.</title>
        <authorList>
            <person name="Li J."/>
            <person name="Goldschmidt-Clermont M."/>
            <person name="Timko M.P."/>
        </authorList>
    </citation>
    <scope>NUCLEOTIDE SEQUENCE [GENOMIC DNA]</scope>
    <source>
        <strain>21gr / CC-1690</strain>
    </source>
</reference>
<reference key="3">
    <citation type="journal article" date="2009" name="BMC Evol. Biol.">
        <title>Nucleotide diversity of the Chlamydomonas reinhardtii plastid genome: addressing the mutational-hazard hypothesis.</title>
        <authorList>
            <person name="Smith D.R."/>
            <person name="Lee R.W."/>
        </authorList>
    </citation>
    <scope>NUCLEOTIDE SEQUENCE [LARGE SCALE GENOMIC DNA]</scope>
    <source>
        <strain>CC-503</strain>
    </source>
</reference>
<reference key="4">
    <citation type="journal article" date="2002" name="Plant Cell">
        <title>The Chlamydomonas reinhardtii plastid chromosome: islands of genes in a sea of repeats.</title>
        <authorList>
            <person name="Maul J.E."/>
            <person name="Lilly J.W."/>
            <person name="Cui L."/>
            <person name="dePamphilis C.W."/>
            <person name="Miller W."/>
            <person name="Harris E.H."/>
            <person name="Stern D.B."/>
        </authorList>
    </citation>
    <scope>IDENTIFICATION</scope>
    <scope>COMPLETE PLASTID GENOME</scope>
</reference>
<feature type="chain" id="PRO_0000219817" description="Light-independent protochlorophyllide reductase subunit B">
    <location>
        <begin position="1"/>
        <end position="687"/>
    </location>
</feature>
<feature type="active site" description="Proton donor" evidence="1">
    <location>
        <position position="441"/>
    </location>
</feature>
<feature type="binding site" evidence="1">
    <location>
        <position position="36"/>
    </location>
    <ligand>
        <name>[4Fe-4S] cluster</name>
        <dbReference type="ChEBI" id="CHEBI:49883"/>
        <note>ligand shared with heterodimeric partner</note>
    </ligand>
</feature>
<feature type="binding site" evidence="1">
    <location>
        <begin position="576"/>
        <end position="577"/>
    </location>
    <ligand>
        <name>substrate</name>
    </ligand>
</feature>
<feature type="sequence conflict" description="In Ref. 1; AAA16321." evidence="2" ref="1">
    <original>S</original>
    <variation>T</variation>
    <location>
        <position position="44"/>
    </location>
</feature>
<feature type="sequence conflict" description="In Ref. 1; AAA16321." evidence="2" ref="1">
    <original>N</original>
    <variation>D</variation>
    <location>
        <position position="210"/>
    </location>
</feature>
<feature type="sequence conflict" description="In Ref. 1; AAA16321." evidence="2" ref="1">
    <original>R</original>
    <variation>A</variation>
    <location>
        <position position="532"/>
    </location>
</feature>
<feature type="sequence conflict" description="In Ref. 1; AAA16321." evidence="2" ref="1">
    <original>G</original>
    <variation>V</variation>
    <location>
        <position position="616"/>
    </location>
</feature>
<feature type="sequence conflict" description="In Ref. 1; AAA16321." evidence="2" ref="1">
    <original>SNVVS</original>
    <variation>FKCSVF</variation>
    <location>
        <begin position="623"/>
        <end position="627"/>
    </location>
</feature>
<geneLocation type="chloroplast"/>
<name>CHLB_CHLRE</name>
<comment type="function">
    <text evidence="1">Component of the dark-operative protochlorophyllide reductase (DPOR) that uses Mg-ATP and reduced ferredoxin to reduce ring D of protochlorophyllide (Pchlide) to form chlorophyllide a (Chlide). This reaction is light-independent. The NB-protein (ChlN-ChlB) is the catalytic component of the complex.</text>
</comment>
<comment type="catalytic activity">
    <reaction evidence="1">
        <text>chlorophyllide a + oxidized 2[4Fe-4S]-[ferredoxin] + 2 ADP + 2 phosphate = protochlorophyllide a + reduced 2[4Fe-4S]-[ferredoxin] + 2 ATP + 2 H2O</text>
        <dbReference type="Rhea" id="RHEA:28202"/>
        <dbReference type="Rhea" id="RHEA-COMP:10002"/>
        <dbReference type="Rhea" id="RHEA-COMP:10004"/>
        <dbReference type="ChEBI" id="CHEBI:15377"/>
        <dbReference type="ChEBI" id="CHEBI:30616"/>
        <dbReference type="ChEBI" id="CHEBI:33722"/>
        <dbReference type="ChEBI" id="CHEBI:33723"/>
        <dbReference type="ChEBI" id="CHEBI:43474"/>
        <dbReference type="ChEBI" id="CHEBI:83348"/>
        <dbReference type="ChEBI" id="CHEBI:83350"/>
        <dbReference type="ChEBI" id="CHEBI:456216"/>
        <dbReference type="EC" id="1.3.7.7"/>
    </reaction>
</comment>
<comment type="cofactor">
    <cofactor evidence="1">
        <name>[4Fe-4S] cluster</name>
        <dbReference type="ChEBI" id="CHEBI:49883"/>
    </cofactor>
    <text evidence="1">Binds 1 [4Fe-4S] cluster per heterodimer. The cluster is bound at the heterodimer interface by residues from both subunits.</text>
</comment>
<comment type="pathway">
    <text evidence="1">Porphyrin-containing compound metabolism; chlorophyll biosynthesis (light-independent).</text>
</comment>
<comment type="subunit">
    <text evidence="1">Protochlorophyllide reductase is composed of three subunits; ChlL, ChlN and ChlB. Forms a heterotetramer of two ChlB and two ChlN subunits.</text>
</comment>
<comment type="subcellular location">
    <subcellularLocation>
        <location>Plastid</location>
        <location>Chloroplast</location>
    </subcellularLocation>
</comment>
<comment type="similarity">
    <text evidence="1">Belongs to the ChlB/BchB/BchZ family.</text>
</comment>